<name>RL34_BURP6</name>
<feature type="chain" id="PRO_1000013300" description="Large ribosomal subunit protein bL34">
    <location>
        <begin position="1"/>
        <end position="44"/>
    </location>
</feature>
<reference key="1">
    <citation type="journal article" date="2010" name="Genome Biol. Evol.">
        <title>Continuing evolution of Burkholderia mallei through genome reduction and large-scale rearrangements.</title>
        <authorList>
            <person name="Losada L."/>
            <person name="Ronning C.M."/>
            <person name="DeShazer D."/>
            <person name="Woods D."/>
            <person name="Fedorova N."/>
            <person name="Kim H.S."/>
            <person name="Shabalina S.A."/>
            <person name="Pearson T.R."/>
            <person name="Brinkac L."/>
            <person name="Tan P."/>
            <person name="Nandi T."/>
            <person name="Crabtree J."/>
            <person name="Badger J."/>
            <person name="Beckstrom-Sternberg S."/>
            <person name="Saqib M."/>
            <person name="Schutzer S.E."/>
            <person name="Keim P."/>
            <person name="Nierman W.C."/>
        </authorList>
    </citation>
    <scope>NUCLEOTIDE SEQUENCE [LARGE SCALE GENOMIC DNA]</scope>
    <source>
        <strain>668</strain>
    </source>
</reference>
<comment type="similarity">
    <text evidence="1">Belongs to the bacterial ribosomal protein bL34 family.</text>
</comment>
<proteinExistence type="inferred from homology"/>
<accession>A3N474</accession>
<keyword id="KW-0687">Ribonucleoprotein</keyword>
<keyword id="KW-0689">Ribosomal protein</keyword>
<organism>
    <name type="scientific">Burkholderia pseudomallei (strain 668)</name>
    <dbReference type="NCBI Taxonomy" id="320373"/>
    <lineage>
        <taxon>Bacteria</taxon>
        <taxon>Pseudomonadati</taxon>
        <taxon>Pseudomonadota</taxon>
        <taxon>Betaproteobacteria</taxon>
        <taxon>Burkholderiales</taxon>
        <taxon>Burkholderiaceae</taxon>
        <taxon>Burkholderia</taxon>
        <taxon>pseudomallei group</taxon>
    </lineage>
</organism>
<sequence length="44" mass="5195">MKRTYQPSVTRRKRTHGFRVRMKTAGGRKVINARRAKGRKRLAI</sequence>
<gene>
    <name evidence="1" type="primary">rpmH</name>
    <name type="ordered locus">BURPS668_0090</name>
</gene>
<evidence type="ECO:0000255" key="1">
    <source>
        <dbReference type="HAMAP-Rule" id="MF_00391"/>
    </source>
</evidence>
<evidence type="ECO:0000305" key="2"/>
<protein>
    <recommendedName>
        <fullName evidence="1">Large ribosomal subunit protein bL34</fullName>
    </recommendedName>
    <alternativeName>
        <fullName evidence="2">50S ribosomal protein L34</fullName>
    </alternativeName>
</protein>
<dbReference type="EMBL" id="CP000570">
    <property type="protein sequence ID" value="ABN83566.1"/>
    <property type="molecule type" value="Genomic_DNA"/>
</dbReference>
<dbReference type="RefSeq" id="WP_004198824.1">
    <property type="nucleotide sequence ID" value="NC_009074.1"/>
</dbReference>
<dbReference type="SMR" id="A3N474"/>
<dbReference type="GeneID" id="98107775"/>
<dbReference type="KEGG" id="bpd:BURPS668_0090"/>
<dbReference type="HOGENOM" id="CLU_129938_2_0_4"/>
<dbReference type="GO" id="GO:1990904">
    <property type="term" value="C:ribonucleoprotein complex"/>
    <property type="evidence" value="ECO:0007669"/>
    <property type="project" value="UniProtKB-KW"/>
</dbReference>
<dbReference type="GO" id="GO:0005840">
    <property type="term" value="C:ribosome"/>
    <property type="evidence" value="ECO:0007669"/>
    <property type="project" value="UniProtKB-KW"/>
</dbReference>
<dbReference type="GO" id="GO:0003735">
    <property type="term" value="F:structural constituent of ribosome"/>
    <property type="evidence" value="ECO:0007669"/>
    <property type="project" value="InterPro"/>
</dbReference>
<dbReference type="GO" id="GO:0006412">
    <property type="term" value="P:translation"/>
    <property type="evidence" value="ECO:0007669"/>
    <property type="project" value="UniProtKB-UniRule"/>
</dbReference>
<dbReference type="FunFam" id="1.10.287.3980:FF:000001">
    <property type="entry name" value="Mitochondrial ribosomal protein L34"/>
    <property type="match status" value="1"/>
</dbReference>
<dbReference type="Gene3D" id="1.10.287.3980">
    <property type="match status" value="1"/>
</dbReference>
<dbReference type="HAMAP" id="MF_00391">
    <property type="entry name" value="Ribosomal_bL34"/>
    <property type="match status" value="1"/>
</dbReference>
<dbReference type="InterPro" id="IPR000271">
    <property type="entry name" value="Ribosomal_bL34"/>
</dbReference>
<dbReference type="InterPro" id="IPR020939">
    <property type="entry name" value="Ribosomal_bL34_CS"/>
</dbReference>
<dbReference type="NCBIfam" id="TIGR01030">
    <property type="entry name" value="rpmH_bact"/>
    <property type="match status" value="1"/>
</dbReference>
<dbReference type="PANTHER" id="PTHR14503:SF4">
    <property type="entry name" value="LARGE RIBOSOMAL SUBUNIT PROTEIN BL34M"/>
    <property type="match status" value="1"/>
</dbReference>
<dbReference type="PANTHER" id="PTHR14503">
    <property type="entry name" value="MITOCHONDRIAL RIBOSOMAL PROTEIN 34 FAMILY MEMBER"/>
    <property type="match status" value="1"/>
</dbReference>
<dbReference type="Pfam" id="PF00468">
    <property type="entry name" value="Ribosomal_L34"/>
    <property type="match status" value="1"/>
</dbReference>
<dbReference type="PROSITE" id="PS00784">
    <property type="entry name" value="RIBOSOMAL_L34"/>
    <property type="match status" value="1"/>
</dbReference>